<protein>
    <recommendedName>
        <fullName evidence="1">Small ribosomal subunit protein uS4</fullName>
    </recommendedName>
    <alternativeName>
        <fullName evidence="2">30S ribosomal protein S4</fullName>
    </alternativeName>
</protein>
<comment type="function">
    <text evidence="1">One of the primary rRNA binding proteins, it binds directly to 16S rRNA where it nucleates assembly of the body of the 30S subunit.</text>
</comment>
<comment type="function">
    <text evidence="1">With S5 and S12 plays an important role in translational accuracy.</text>
</comment>
<comment type="subunit">
    <text evidence="1">Part of the 30S ribosomal subunit. Contacts protein S5. The interaction surface between S4 and S5 is involved in control of translational fidelity.</text>
</comment>
<comment type="similarity">
    <text evidence="1">Belongs to the universal ribosomal protein uS4 family.</text>
</comment>
<accession>Q9S0Q9</accession>
<keyword id="KW-0687">Ribonucleoprotein</keyword>
<keyword id="KW-0689">Ribosomal protein</keyword>
<keyword id="KW-0694">RNA-binding</keyword>
<keyword id="KW-0699">rRNA-binding</keyword>
<reference key="1">
    <citation type="journal article" date="2000" name="FEMS Microbiol. Lett.">
        <title>Isolation and piezoresponse of the rpoA gene encoding the RNA polymerase alpha subunit from the deep-sea piezophilic bacterium Shewanella violacea.</title>
        <authorList>
            <person name="Nakasone K."/>
            <person name="Ikegami A."/>
            <person name="Fujii S."/>
            <person name="Kato C."/>
            <person name="Horikoshi K."/>
        </authorList>
    </citation>
    <scope>NUCLEOTIDE SEQUENCE [GENOMIC DNA]</scope>
</reference>
<feature type="chain" id="PRO_0000132453" description="Small ribosomal subunit protein uS4">
    <location>
        <begin position="1"/>
        <end position="206"/>
    </location>
</feature>
<feature type="domain" description="S4 RNA-binding" evidence="1">
    <location>
        <begin position="96"/>
        <end position="159"/>
    </location>
</feature>
<organism>
    <name type="scientific">Shewanella violacea</name>
    <dbReference type="NCBI Taxonomy" id="60217"/>
    <lineage>
        <taxon>Bacteria</taxon>
        <taxon>Pseudomonadati</taxon>
        <taxon>Pseudomonadota</taxon>
        <taxon>Gammaproteobacteria</taxon>
        <taxon>Alteromonadales</taxon>
        <taxon>Shewanellaceae</taxon>
        <taxon>Shewanella</taxon>
    </lineage>
</organism>
<name>RS4_SHEVI</name>
<proteinExistence type="inferred from homology"/>
<gene>
    <name evidence="1" type="primary">rpsD</name>
</gene>
<sequence>MARYLGPKLKLSRREGTDLFLKSGVRAIDSKCKLETPPGRHGARKTRLSEYGVQLREKQKVRRIYGVLEKQFRNYYKDAARQKGNTGENLLTLLETRLDNVVYRMGFGATRAESRQLVSHKSILVNGSVVNIPSFKVSASDVISIREKSKKQARISASLEVASQREKPTWVEVDNTKMEGAFKRLPERSDLSAEINEQLIVELCSK</sequence>
<dbReference type="EMBL" id="AB032408">
    <property type="protein sequence ID" value="BAA84524.1"/>
    <property type="molecule type" value="Genomic_DNA"/>
</dbReference>
<dbReference type="SMR" id="Q9S0Q9"/>
<dbReference type="GO" id="GO:0015935">
    <property type="term" value="C:small ribosomal subunit"/>
    <property type="evidence" value="ECO:0007669"/>
    <property type="project" value="InterPro"/>
</dbReference>
<dbReference type="GO" id="GO:0019843">
    <property type="term" value="F:rRNA binding"/>
    <property type="evidence" value="ECO:0007669"/>
    <property type="project" value="UniProtKB-UniRule"/>
</dbReference>
<dbReference type="GO" id="GO:0003735">
    <property type="term" value="F:structural constituent of ribosome"/>
    <property type="evidence" value="ECO:0007669"/>
    <property type="project" value="InterPro"/>
</dbReference>
<dbReference type="GO" id="GO:0042274">
    <property type="term" value="P:ribosomal small subunit biogenesis"/>
    <property type="evidence" value="ECO:0007669"/>
    <property type="project" value="TreeGrafter"/>
</dbReference>
<dbReference type="GO" id="GO:0006412">
    <property type="term" value="P:translation"/>
    <property type="evidence" value="ECO:0007669"/>
    <property type="project" value="UniProtKB-UniRule"/>
</dbReference>
<dbReference type="CDD" id="cd00165">
    <property type="entry name" value="S4"/>
    <property type="match status" value="1"/>
</dbReference>
<dbReference type="FunFam" id="1.10.1050.10:FF:000001">
    <property type="entry name" value="30S ribosomal protein S4"/>
    <property type="match status" value="1"/>
</dbReference>
<dbReference type="FunFam" id="3.10.290.10:FF:000001">
    <property type="entry name" value="30S ribosomal protein S4"/>
    <property type="match status" value="1"/>
</dbReference>
<dbReference type="Gene3D" id="1.10.1050.10">
    <property type="entry name" value="Ribosomal Protein S4 Delta 41, Chain A, domain 1"/>
    <property type="match status" value="1"/>
</dbReference>
<dbReference type="Gene3D" id="3.10.290.10">
    <property type="entry name" value="RNA-binding S4 domain"/>
    <property type="match status" value="1"/>
</dbReference>
<dbReference type="HAMAP" id="MF_01306_B">
    <property type="entry name" value="Ribosomal_uS4_B"/>
    <property type="match status" value="1"/>
</dbReference>
<dbReference type="InterPro" id="IPR022801">
    <property type="entry name" value="Ribosomal_uS4"/>
</dbReference>
<dbReference type="InterPro" id="IPR005709">
    <property type="entry name" value="Ribosomal_uS4_bac-type"/>
</dbReference>
<dbReference type="InterPro" id="IPR018079">
    <property type="entry name" value="Ribosomal_uS4_CS"/>
</dbReference>
<dbReference type="InterPro" id="IPR001912">
    <property type="entry name" value="Ribosomal_uS4_N"/>
</dbReference>
<dbReference type="InterPro" id="IPR002942">
    <property type="entry name" value="S4_RNA-bd"/>
</dbReference>
<dbReference type="InterPro" id="IPR036986">
    <property type="entry name" value="S4_RNA-bd_sf"/>
</dbReference>
<dbReference type="NCBIfam" id="NF003717">
    <property type="entry name" value="PRK05327.1"/>
    <property type="match status" value="1"/>
</dbReference>
<dbReference type="NCBIfam" id="TIGR01017">
    <property type="entry name" value="rpsD_bact"/>
    <property type="match status" value="1"/>
</dbReference>
<dbReference type="PANTHER" id="PTHR11831">
    <property type="entry name" value="30S 40S RIBOSOMAL PROTEIN"/>
    <property type="match status" value="1"/>
</dbReference>
<dbReference type="PANTHER" id="PTHR11831:SF4">
    <property type="entry name" value="SMALL RIBOSOMAL SUBUNIT PROTEIN US4M"/>
    <property type="match status" value="1"/>
</dbReference>
<dbReference type="Pfam" id="PF00163">
    <property type="entry name" value="Ribosomal_S4"/>
    <property type="match status" value="1"/>
</dbReference>
<dbReference type="Pfam" id="PF01479">
    <property type="entry name" value="S4"/>
    <property type="match status" value="1"/>
</dbReference>
<dbReference type="SMART" id="SM01390">
    <property type="entry name" value="Ribosomal_S4"/>
    <property type="match status" value="1"/>
</dbReference>
<dbReference type="SMART" id="SM00363">
    <property type="entry name" value="S4"/>
    <property type="match status" value="1"/>
</dbReference>
<dbReference type="SUPFAM" id="SSF55174">
    <property type="entry name" value="Alpha-L RNA-binding motif"/>
    <property type="match status" value="1"/>
</dbReference>
<dbReference type="PROSITE" id="PS00632">
    <property type="entry name" value="RIBOSOMAL_S4"/>
    <property type="match status" value="1"/>
</dbReference>
<dbReference type="PROSITE" id="PS50889">
    <property type="entry name" value="S4"/>
    <property type="match status" value="1"/>
</dbReference>
<evidence type="ECO:0000255" key="1">
    <source>
        <dbReference type="HAMAP-Rule" id="MF_01306"/>
    </source>
</evidence>
<evidence type="ECO:0000305" key="2"/>